<accession>Q564Q1</accession>
<accession>O62107</accession>
<comment type="function">
    <text evidence="3">Catalyzes two distinct but analogous reactions: the reversible epimerization of UDP-glucose to UDP-galactose and the reversible epimerization of UDP-N-acetylglucosamine to UDP-N-acetylgalactosamine. The reaction with UDP-Gal plays a critical role in the Leloir pathway of galactose catabolism in which galactose is converted to the glycolytic intermediate glucose 6-phosphate. It contributes to the catabolism of dietary galactose and enables the endogenous biosynthesis of both UDP-Gal and UDP-GalNAc when exogenous sources are limited. Both UDP-sugar interconversions are important for the synthesis of glycoproteins and glycolipids.</text>
</comment>
<comment type="catalytic activity">
    <reaction evidence="6">
        <text>UDP-alpha-D-glucose = UDP-alpha-D-galactose</text>
        <dbReference type="Rhea" id="RHEA:22168"/>
        <dbReference type="ChEBI" id="CHEBI:58885"/>
        <dbReference type="ChEBI" id="CHEBI:66914"/>
        <dbReference type="EC" id="5.1.3.2"/>
    </reaction>
</comment>
<comment type="catalytic activity">
    <reaction evidence="6">
        <text>UDP-N-acetyl-alpha-D-glucosamine = UDP-N-acetyl-alpha-D-galactosamine</text>
        <dbReference type="Rhea" id="RHEA:20517"/>
        <dbReference type="ChEBI" id="CHEBI:57705"/>
        <dbReference type="ChEBI" id="CHEBI:67138"/>
        <dbReference type="EC" id="5.1.3.7"/>
    </reaction>
</comment>
<comment type="cofactor">
    <cofactor evidence="2">
        <name>NAD(+)</name>
        <dbReference type="ChEBI" id="CHEBI:57540"/>
    </cofactor>
</comment>
<comment type="pathway">
    <text evidence="3">Carbohydrate metabolism; galactose metabolism.</text>
</comment>
<comment type="alternative products">
    <event type="alternative splicing"/>
    <isoform>
        <id>Q564Q1-1</id>
        <name evidence="9">b</name>
        <sequence type="displayed"/>
    </isoform>
    <isoform>
        <id>Q564Q1-2</id>
        <name evidence="8">a</name>
        <sequence type="described" ref="VSP_059051"/>
    </isoform>
</comment>
<comment type="tissue specificity">
    <text evidence="3">Expressed in gonads, vulva, intestine, hypdermis and nervous system.</text>
</comment>
<comment type="developmental stage">
    <text evidence="3">Expressed in embryos, larvae and adults.</text>
</comment>
<comment type="similarity">
    <text evidence="2">Belongs to the NAD(P)-dependent epimerase/dehydratase family.</text>
</comment>
<dbReference type="EC" id="5.1.3.2" evidence="6"/>
<dbReference type="EC" id="5.1.3.7" evidence="6"/>
<dbReference type="EMBL" id="BX284601">
    <property type="protein sequence ID" value="CAB16861.1"/>
    <property type="molecule type" value="Genomic_DNA"/>
</dbReference>
<dbReference type="EMBL" id="BX284601">
    <property type="protein sequence ID" value="CAI79146.1"/>
    <property type="molecule type" value="Genomic_DNA"/>
</dbReference>
<dbReference type="PIR" id="T19989">
    <property type="entry name" value="T19989"/>
</dbReference>
<dbReference type="RefSeq" id="NP_001021051.1">
    <molecule id="Q564Q1-2"/>
    <property type="nucleotide sequence ID" value="NM_001025880.3"/>
</dbReference>
<dbReference type="RefSeq" id="NP_001021052.1">
    <molecule id="Q564Q1-1"/>
    <property type="nucleotide sequence ID" value="NM_001025881.7"/>
</dbReference>
<dbReference type="SMR" id="Q564Q1"/>
<dbReference type="DIP" id="DIP-26300N"/>
<dbReference type="FunCoup" id="Q564Q1">
    <property type="interactions" value="1227"/>
</dbReference>
<dbReference type="IntAct" id="Q564Q1">
    <property type="interactions" value="1"/>
</dbReference>
<dbReference type="STRING" id="6239.C47B2.6b.1"/>
<dbReference type="PaxDb" id="6239-C47B2.6b"/>
<dbReference type="PeptideAtlas" id="Q564Q1"/>
<dbReference type="EnsemblMetazoa" id="C47B2.6a.1">
    <molecule id="Q564Q1-2"/>
    <property type="protein sequence ID" value="C47B2.6a.1"/>
    <property type="gene ID" value="WBGene00008132"/>
</dbReference>
<dbReference type="EnsemblMetazoa" id="C47B2.6a.2">
    <molecule id="Q564Q1-2"/>
    <property type="protein sequence ID" value="C47B2.6a.2"/>
    <property type="gene ID" value="WBGene00008132"/>
</dbReference>
<dbReference type="EnsemblMetazoa" id="C47B2.6b.1">
    <molecule id="Q564Q1-1"/>
    <property type="protein sequence ID" value="C47B2.6b.1"/>
    <property type="gene ID" value="WBGene00008132"/>
</dbReference>
<dbReference type="EnsemblMetazoa" id="C47B2.6b.2">
    <molecule id="Q564Q1-1"/>
    <property type="protein sequence ID" value="C47B2.6b.2"/>
    <property type="gene ID" value="WBGene00008132"/>
</dbReference>
<dbReference type="GeneID" id="173171"/>
<dbReference type="KEGG" id="cel:CELE_C47B2.6"/>
<dbReference type="UCSC" id="C47B2.6b">
    <property type="organism name" value="c. elegans"/>
</dbReference>
<dbReference type="AGR" id="WB:WBGene00008132"/>
<dbReference type="CTD" id="173171"/>
<dbReference type="WormBase" id="C47B2.6a">
    <molecule id="Q564Q1-2"/>
    <property type="protein sequence ID" value="CE17566"/>
    <property type="gene ID" value="WBGene00008132"/>
    <property type="gene designation" value="gale-1"/>
</dbReference>
<dbReference type="WormBase" id="C47B2.6b">
    <molecule id="Q564Q1-1"/>
    <property type="protein sequence ID" value="CE38295"/>
    <property type="gene ID" value="WBGene00008132"/>
    <property type="gene designation" value="gale-1"/>
</dbReference>
<dbReference type="eggNOG" id="KOG1371">
    <property type="taxonomic scope" value="Eukaryota"/>
</dbReference>
<dbReference type="GeneTree" id="ENSGT00940000158000"/>
<dbReference type="InParanoid" id="Q564Q1"/>
<dbReference type="OMA" id="GEHLICN"/>
<dbReference type="OrthoDB" id="9402762at2759"/>
<dbReference type="PhylomeDB" id="Q564Q1"/>
<dbReference type="Reactome" id="R-CEL-70370">
    <property type="pathway name" value="Galactose catabolism"/>
</dbReference>
<dbReference type="UniPathway" id="UPA00214"/>
<dbReference type="PRO" id="PR:Q564Q1"/>
<dbReference type="Proteomes" id="UP000001940">
    <property type="component" value="Chromosome I"/>
</dbReference>
<dbReference type="Bgee" id="WBGene00008132">
    <property type="expression patterns" value="Expressed in adult organism and 4 other cell types or tissues"/>
</dbReference>
<dbReference type="GO" id="GO:0005829">
    <property type="term" value="C:cytosol"/>
    <property type="evidence" value="ECO:0000318"/>
    <property type="project" value="GO_Central"/>
</dbReference>
<dbReference type="GO" id="GO:0003978">
    <property type="term" value="F:UDP-glucose 4-epimerase activity"/>
    <property type="evidence" value="ECO:0000315"/>
    <property type="project" value="UniProtKB"/>
</dbReference>
<dbReference type="GO" id="GO:0003974">
    <property type="term" value="F:UDP-N-acetylglucosamine 4-epimerase activity"/>
    <property type="evidence" value="ECO:0000315"/>
    <property type="project" value="UniProtKB"/>
</dbReference>
<dbReference type="GO" id="GO:0042335">
    <property type="term" value="P:cuticle development"/>
    <property type="evidence" value="ECO:0000315"/>
    <property type="project" value="WormBase"/>
</dbReference>
<dbReference type="GO" id="GO:0050830">
    <property type="term" value="P:defense response to Gram-positive bacterium"/>
    <property type="evidence" value="ECO:0000315"/>
    <property type="project" value="UniProtKB"/>
</dbReference>
<dbReference type="GO" id="GO:0009792">
    <property type="term" value="P:embryo development ending in birth or egg hatching"/>
    <property type="evidence" value="ECO:0000315"/>
    <property type="project" value="UniProtKB"/>
</dbReference>
<dbReference type="GO" id="GO:0033499">
    <property type="term" value="P:galactose catabolic process via UDP-galactose, Leloir pathway"/>
    <property type="evidence" value="ECO:0000318"/>
    <property type="project" value="GO_Central"/>
</dbReference>
<dbReference type="GO" id="GO:0006012">
    <property type="term" value="P:galactose metabolic process"/>
    <property type="evidence" value="ECO:0000315"/>
    <property type="project" value="UniProtKB"/>
</dbReference>
<dbReference type="GO" id="GO:0035262">
    <property type="term" value="P:gonad morphogenesis"/>
    <property type="evidence" value="ECO:0000315"/>
    <property type="project" value="UniProtKB"/>
</dbReference>
<dbReference type="GO" id="GO:0036498">
    <property type="term" value="P:IRE1-mediated unfolded protein response"/>
    <property type="evidence" value="ECO:0007007"/>
    <property type="project" value="WormBase"/>
</dbReference>
<dbReference type="GO" id="GO:1900102">
    <property type="term" value="P:negative regulation of endoplasmic reticulum unfolded protein response"/>
    <property type="evidence" value="ECO:0000315"/>
    <property type="project" value="UniProtKB"/>
</dbReference>
<dbReference type="GO" id="GO:0002119">
    <property type="term" value="P:nematode larval development"/>
    <property type="evidence" value="ECO:0000315"/>
    <property type="project" value="UniProtKB"/>
</dbReference>
<dbReference type="GO" id="GO:0040026">
    <property type="term" value="P:positive regulation of vulval development"/>
    <property type="evidence" value="ECO:0000315"/>
    <property type="project" value="UniProtKB"/>
</dbReference>
<dbReference type="GO" id="GO:1903354">
    <property type="term" value="P:regulation of distal tip cell migration"/>
    <property type="evidence" value="ECO:0000315"/>
    <property type="project" value="UniProtKB"/>
</dbReference>
<dbReference type="CDD" id="cd05247">
    <property type="entry name" value="UDP_G4E_1_SDR_e"/>
    <property type="match status" value="1"/>
</dbReference>
<dbReference type="Gene3D" id="3.40.50.720">
    <property type="entry name" value="NAD(P)-binding Rossmann-like Domain"/>
    <property type="match status" value="1"/>
</dbReference>
<dbReference type="Gene3D" id="3.90.25.10">
    <property type="entry name" value="UDP-galactose 4-epimerase, domain 1"/>
    <property type="match status" value="1"/>
</dbReference>
<dbReference type="InterPro" id="IPR001509">
    <property type="entry name" value="Epimerase_deHydtase"/>
</dbReference>
<dbReference type="InterPro" id="IPR036291">
    <property type="entry name" value="NAD(P)-bd_dom_sf"/>
</dbReference>
<dbReference type="InterPro" id="IPR005886">
    <property type="entry name" value="UDP_G4E"/>
</dbReference>
<dbReference type="NCBIfam" id="TIGR01179">
    <property type="entry name" value="galE"/>
    <property type="match status" value="1"/>
</dbReference>
<dbReference type="NCBIfam" id="NF007956">
    <property type="entry name" value="PRK10675.1"/>
    <property type="match status" value="1"/>
</dbReference>
<dbReference type="PANTHER" id="PTHR43725">
    <property type="entry name" value="UDP-GLUCOSE 4-EPIMERASE"/>
    <property type="match status" value="1"/>
</dbReference>
<dbReference type="PANTHER" id="PTHR43725:SF47">
    <property type="entry name" value="UDP-GLUCOSE 4-EPIMERASE"/>
    <property type="match status" value="1"/>
</dbReference>
<dbReference type="Pfam" id="PF01370">
    <property type="entry name" value="Epimerase"/>
    <property type="match status" value="1"/>
</dbReference>
<dbReference type="SUPFAM" id="SSF51735">
    <property type="entry name" value="NAD(P)-binding Rossmann-fold domains"/>
    <property type="match status" value="1"/>
</dbReference>
<feature type="chain" id="PRO_0000441236" description="UDP-glucose 4-epimerase">
    <location>
        <begin position="1"/>
        <end position="349"/>
    </location>
</feature>
<feature type="active site" description="Proton acceptor" evidence="1">
    <location>
        <position position="158"/>
    </location>
</feature>
<feature type="binding site" evidence="1">
    <location>
        <begin position="10"/>
        <end position="12"/>
    </location>
    <ligand>
        <name>NAD(+)</name>
        <dbReference type="ChEBI" id="CHEBI:57540"/>
    </ligand>
</feature>
<feature type="binding site" evidence="1">
    <location>
        <begin position="31"/>
        <end position="35"/>
    </location>
    <ligand>
        <name>NAD(+)</name>
        <dbReference type="ChEBI" id="CHEBI:57540"/>
    </ligand>
</feature>
<feature type="binding site" evidence="1">
    <location>
        <begin position="66"/>
        <end position="67"/>
    </location>
    <ligand>
        <name>NAD(+)</name>
        <dbReference type="ChEBI" id="CHEBI:57540"/>
    </ligand>
</feature>
<feature type="binding site" evidence="1">
    <location>
        <position position="92"/>
    </location>
    <ligand>
        <name>NAD(+)</name>
        <dbReference type="ChEBI" id="CHEBI:57540"/>
    </ligand>
</feature>
<feature type="binding site" evidence="1">
    <location>
        <begin position="132"/>
        <end position="134"/>
    </location>
    <ligand>
        <name>substrate</name>
    </ligand>
</feature>
<feature type="binding site" evidence="1">
    <location>
        <position position="162"/>
    </location>
    <ligand>
        <name>NAD(+)</name>
        <dbReference type="ChEBI" id="CHEBI:57540"/>
    </ligand>
</feature>
<feature type="binding site" evidence="1">
    <location>
        <begin position="186"/>
        <end position="188"/>
    </location>
    <ligand>
        <name>substrate</name>
    </ligand>
</feature>
<feature type="binding site" evidence="1">
    <location>
        <position position="186"/>
    </location>
    <ligand>
        <name>NAD(+)</name>
        <dbReference type="ChEBI" id="CHEBI:57540"/>
    </ligand>
</feature>
<feature type="binding site" evidence="1">
    <location>
        <begin position="207"/>
        <end position="209"/>
    </location>
    <ligand>
        <name>substrate</name>
    </ligand>
</feature>
<feature type="binding site" evidence="1">
    <location>
        <begin position="225"/>
        <end position="227"/>
    </location>
    <ligand>
        <name>substrate</name>
    </ligand>
</feature>
<feature type="binding site" evidence="1">
    <location>
        <position position="240"/>
    </location>
    <ligand>
        <name>substrate</name>
    </ligand>
</feature>
<feature type="binding site" evidence="1">
    <location>
        <begin position="303"/>
        <end position="306"/>
    </location>
    <ligand>
        <name>substrate</name>
    </ligand>
</feature>
<feature type="splice variant" id="VSP_059051" description="In isoform a." evidence="5">
    <location>
        <begin position="39"/>
        <end position="40"/>
    </location>
</feature>
<feature type="mutagenesis site" description="In pv18; at the restrictive temperature of 25 degrees Celsius, embryos have cell-cell adhesion defects and die before hatching. The few surviving animals are arrested at the L1 larval stage. At the permissive temperature of 16-20 degrees Celsius, causes a developmental delay. Distal tip cell migration is impaired due to a reduced localization of metalloprotease mig-17 to the gonad basement membrane. Vulva lumen is smaller at the L4 larval stage. Accumulation of UDP-galactose (Gal) and reduction in UDP-N-acetylgalactosamine (GalNAc) levels. Hypersensitivity to a galactose-rich diet characterized by a slow development often resulting in an arrest at the L1 larval stage. Up-regulation of ER stress response protein hsp-4; expression is suppressed in an xbp-1 RNAi-mediated knockdown animals. Reduced survival upon E.faecalis or S.aureus-mediated infection." evidence="3">
    <original>P</original>
    <variation>L</variation>
    <location>
        <position position="314"/>
    </location>
</feature>
<gene>
    <name evidence="9" type="primary">gale-1</name>
    <name evidence="9" type="ORF">C47B2.6</name>
</gene>
<reference evidence="7" key="1">
    <citation type="journal article" date="1998" name="Science">
        <title>Genome sequence of the nematode C. elegans: a platform for investigating biology.</title>
        <authorList>
            <consortium name="The C. elegans sequencing consortium"/>
        </authorList>
    </citation>
    <scope>NUCLEOTIDE SEQUENCE [LARGE SCALE GENOMIC DNA]</scope>
    <source>
        <strain evidence="7">Bristol N2</strain>
    </source>
</reference>
<reference evidence="5" key="2">
    <citation type="journal article" date="2014" name="Genetics">
        <title>Developmental defects in a Caenorhabditis elegans model for type III galactosemia.</title>
        <authorList>
            <person name="Brokate-Llanos A.M."/>
            <person name="Monje J.M."/>
            <person name="Murdoch P."/>
            <person name="Munoz M.J."/>
        </authorList>
    </citation>
    <scope>FUNCTION</scope>
    <scope>CATALYTIC ACTIVITY</scope>
    <scope>PATHWAY</scope>
    <scope>TISSUE SPECIFICITY</scope>
    <scope>DEVELOPMENTAL STAGE</scope>
    <scope>MUTAGENESIS OF PRO-314</scope>
</reference>
<proteinExistence type="evidence at protein level"/>
<name>GALE_CAEEL</name>
<organism evidence="7">
    <name type="scientific">Caenorhabditis elegans</name>
    <dbReference type="NCBI Taxonomy" id="6239"/>
    <lineage>
        <taxon>Eukaryota</taxon>
        <taxon>Metazoa</taxon>
        <taxon>Ecdysozoa</taxon>
        <taxon>Nematoda</taxon>
        <taxon>Chromadorea</taxon>
        <taxon>Rhabditida</taxon>
        <taxon>Rhabditina</taxon>
        <taxon>Rhabditomorpha</taxon>
        <taxon>Rhabditoidea</taxon>
        <taxon>Rhabditidae</taxon>
        <taxon>Peloderinae</taxon>
        <taxon>Caenorhabditis</taxon>
    </lineage>
</organism>
<evidence type="ECO:0000250" key="1">
    <source>
        <dbReference type="UniProtKB" id="Q14376"/>
    </source>
</evidence>
<evidence type="ECO:0000255" key="2">
    <source>
        <dbReference type="RuleBase" id="RU003508"/>
    </source>
</evidence>
<evidence type="ECO:0000269" key="3">
    <source>
    </source>
</evidence>
<evidence type="ECO:0000303" key="4">
    <source>
    </source>
</evidence>
<evidence type="ECO:0000305" key="5"/>
<evidence type="ECO:0000305" key="6">
    <source>
    </source>
</evidence>
<evidence type="ECO:0000312" key="7">
    <source>
        <dbReference type="Proteomes" id="UP000001940"/>
    </source>
</evidence>
<evidence type="ECO:0000312" key="8">
    <source>
        <dbReference type="WormBase" id="C47B2.6a"/>
    </source>
</evidence>
<evidence type="ECO:0000312" key="9">
    <source>
        <dbReference type="WormBase" id="C47B2.6b"/>
    </source>
</evidence>
<protein>
    <recommendedName>
        <fullName evidence="1">UDP-glucose 4-epimerase</fullName>
        <ecNumber evidence="6">5.1.3.2</ecNumber>
    </recommendedName>
    <alternativeName>
        <fullName evidence="5">Galactowaldenase</fullName>
    </alternativeName>
    <alternativeName>
        <fullName evidence="1">UDP-N-acetylgalactosamine 4-epimerase</fullName>
        <shortName evidence="1">UDP-GalNAc 4-epimerase</shortName>
    </alternativeName>
    <alternativeName>
        <fullName evidence="1">UDP-N-acetylglucosamine 4-epimerase</fullName>
        <shortName evidence="1">UDP-GlcNAc 4-epimerase</shortName>
        <ecNumber evidence="6">5.1.3.7</ecNumber>
    </alternativeName>
    <alternativeName>
        <fullName evidence="4">UDP-galactose 4-epimerase</fullName>
    </alternativeName>
</protein>
<keyword id="KW-0025">Alternative splicing</keyword>
<keyword id="KW-0119">Carbohydrate metabolism</keyword>
<keyword id="KW-0299">Galactose metabolism</keyword>
<keyword id="KW-0413">Isomerase</keyword>
<keyword id="KW-0520">NAD</keyword>
<keyword id="KW-1185">Reference proteome</keyword>
<sequence>MHILVTGAAGFIGSHTVLELLNSGYTVLCIDNFANAISVTDEHGNAISLKRVAQLTGKDVPFQNVDVCDEAALEKVFSENKFDGIIHLAALKAVGESVAKPLQYYSNNLVASLNLIQMCLKYNVKNFVFSSSATVYGPPSELPITEKSQTGQGITNPYGQTKYMMEQILIDVGKANPEWNVVLLRYFNPVGAHKSGLIGEDPKGVPNNLMPYVSQVAIGKLPVLTIYGDQFDTVDGTGVRDYIHVVDLAKGHVKAFDRIKTVGNIGTEIYNLGTGVGYSVRQMVDALKKVSGRDIPVKIGVPRPGDVASVYCDPSLAQEKLGWRAETGLEEMCADLWNWQTKNPQGFSA</sequence>